<proteinExistence type="inferred from homology"/>
<feature type="chain" id="PRO_1000023331" description="DNA-binding protein Fis">
    <location>
        <begin position="1"/>
        <end position="98"/>
    </location>
</feature>
<feature type="DNA-binding region" description="H-T-H motif" evidence="1">
    <location>
        <begin position="74"/>
        <end position="93"/>
    </location>
</feature>
<protein>
    <recommendedName>
        <fullName evidence="1">DNA-binding protein Fis</fullName>
    </recommendedName>
</protein>
<gene>
    <name evidence="1" type="primary">fis</name>
    <name type="ordered locus">KPN78578_36380</name>
    <name type="ORF">KPN_03670</name>
</gene>
<name>FIS_KLEP7</name>
<organism>
    <name type="scientific">Klebsiella pneumoniae subsp. pneumoniae (strain ATCC 700721 / MGH 78578)</name>
    <dbReference type="NCBI Taxonomy" id="272620"/>
    <lineage>
        <taxon>Bacteria</taxon>
        <taxon>Pseudomonadati</taxon>
        <taxon>Pseudomonadota</taxon>
        <taxon>Gammaproteobacteria</taxon>
        <taxon>Enterobacterales</taxon>
        <taxon>Enterobacteriaceae</taxon>
        <taxon>Klebsiella/Raoultella group</taxon>
        <taxon>Klebsiella</taxon>
        <taxon>Klebsiella pneumoniae complex</taxon>
    </lineage>
</organism>
<evidence type="ECO:0000255" key="1">
    <source>
        <dbReference type="HAMAP-Rule" id="MF_00166"/>
    </source>
</evidence>
<dbReference type="EMBL" id="CP000647">
    <property type="protein sequence ID" value="ABR79062.1"/>
    <property type="molecule type" value="Genomic_DNA"/>
</dbReference>
<dbReference type="RefSeq" id="WP_000462905.1">
    <property type="nucleotide sequence ID" value="NC_009648.1"/>
</dbReference>
<dbReference type="SMR" id="A6TES8"/>
<dbReference type="STRING" id="272620.KPN_03670"/>
<dbReference type="jPOST" id="A6TES8"/>
<dbReference type="PaxDb" id="272620-KPN_03670"/>
<dbReference type="EnsemblBacteria" id="ABR79062">
    <property type="protein sequence ID" value="ABR79062"/>
    <property type="gene ID" value="KPN_03670"/>
</dbReference>
<dbReference type="GeneID" id="98390389"/>
<dbReference type="KEGG" id="kpn:KPN_03670"/>
<dbReference type="HOGENOM" id="CLU_158040_3_0_6"/>
<dbReference type="Proteomes" id="UP000000265">
    <property type="component" value="Chromosome"/>
</dbReference>
<dbReference type="GO" id="GO:0003700">
    <property type="term" value="F:DNA-binding transcription factor activity"/>
    <property type="evidence" value="ECO:0007669"/>
    <property type="project" value="UniProtKB-UniRule"/>
</dbReference>
<dbReference type="GO" id="GO:0043565">
    <property type="term" value="F:sequence-specific DNA binding"/>
    <property type="evidence" value="ECO:0007669"/>
    <property type="project" value="InterPro"/>
</dbReference>
<dbReference type="FunFam" id="1.10.10.60:FF:000006">
    <property type="entry name" value="DNA-binding protein Fis"/>
    <property type="match status" value="1"/>
</dbReference>
<dbReference type="Gene3D" id="1.10.10.60">
    <property type="entry name" value="Homeodomain-like"/>
    <property type="match status" value="1"/>
</dbReference>
<dbReference type="HAMAP" id="MF_00166">
    <property type="entry name" value="DNA_binding_Fis"/>
    <property type="match status" value="1"/>
</dbReference>
<dbReference type="InterPro" id="IPR005412">
    <property type="entry name" value="Fis_DNA-bd"/>
</dbReference>
<dbReference type="InterPro" id="IPR009057">
    <property type="entry name" value="Homeodomain-like_sf"/>
</dbReference>
<dbReference type="InterPro" id="IPR002197">
    <property type="entry name" value="HTH_Fis"/>
</dbReference>
<dbReference type="InterPro" id="IPR050207">
    <property type="entry name" value="Trans_regulatory_Fis"/>
</dbReference>
<dbReference type="NCBIfam" id="NF001659">
    <property type="entry name" value="PRK00430.1"/>
    <property type="match status" value="1"/>
</dbReference>
<dbReference type="PANTHER" id="PTHR47918">
    <property type="entry name" value="DNA-BINDING PROTEIN FIS"/>
    <property type="match status" value="1"/>
</dbReference>
<dbReference type="PANTHER" id="PTHR47918:SF1">
    <property type="entry name" value="DNA-BINDING PROTEIN FIS"/>
    <property type="match status" value="1"/>
</dbReference>
<dbReference type="Pfam" id="PF02954">
    <property type="entry name" value="HTH_8"/>
    <property type="match status" value="1"/>
</dbReference>
<dbReference type="PIRSF" id="PIRSF002097">
    <property type="entry name" value="DNA-binding_Fis"/>
    <property type="match status" value="1"/>
</dbReference>
<dbReference type="PRINTS" id="PR01591">
    <property type="entry name" value="DNABINDNGFIS"/>
</dbReference>
<dbReference type="PRINTS" id="PR01590">
    <property type="entry name" value="HTHFIS"/>
</dbReference>
<dbReference type="SUPFAM" id="SSF46689">
    <property type="entry name" value="Homeodomain-like"/>
    <property type="match status" value="1"/>
</dbReference>
<sequence>MFEQRVNSDVLTVSTVNSQDQVTQKPLRDSVKQALKNYFAQLNGQDVNDLYELVLAEVEQPLLDMVMQYTRGNQTRAALMMGINRGTLRKKLKKYGMN</sequence>
<comment type="function">
    <text evidence="1">Activates ribosomal RNA transcription. Plays a direct role in upstream activation of rRNA promoters.</text>
</comment>
<comment type="subunit">
    <text evidence="1">Homodimer.</text>
</comment>
<comment type="similarity">
    <text evidence="1">Belongs to the transcriptional regulatory Fis family.</text>
</comment>
<keyword id="KW-0010">Activator</keyword>
<keyword id="KW-0238">DNA-binding</keyword>
<keyword id="KW-0804">Transcription</keyword>
<keyword id="KW-0805">Transcription regulation</keyword>
<reference key="1">
    <citation type="submission" date="2006-09" db="EMBL/GenBank/DDBJ databases">
        <authorList>
            <consortium name="The Klebsiella pneumonia Genome Sequencing Project"/>
            <person name="McClelland M."/>
            <person name="Sanderson E.K."/>
            <person name="Spieth J."/>
            <person name="Clifton W.S."/>
            <person name="Latreille P."/>
            <person name="Sabo A."/>
            <person name="Pepin K."/>
            <person name="Bhonagiri V."/>
            <person name="Porwollik S."/>
            <person name="Ali J."/>
            <person name="Wilson R.K."/>
        </authorList>
    </citation>
    <scope>NUCLEOTIDE SEQUENCE [LARGE SCALE GENOMIC DNA]</scope>
    <source>
        <strain>ATCC 700721 / MGH 78578</strain>
    </source>
</reference>
<accession>A6TES8</accession>